<evidence type="ECO:0000250" key="1"/>
<evidence type="ECO:0000256" key="2">
    <source>
        <dbReference type="SAM" id="MobiDB-lite"/>
    </source>
</evidence>
<evidence type="ECO:0000305" key="3"/>
<evidence type="ECO:0007744" key="4">
    <source>
    </source>
</evidence>
<organism>
    <name type="scientific">Arabidopsis thaliana</name>
    <name type="common">Mouse-ear cress</name>
    <dbReference type="NCBI Taxonomy" id="3702"/>
    <lineage>
        <taxon>Eukaryota</taxon>
        <taxon>Viridiplantae</taxon>
        <taxon>Streptophyta</taxon>
        <taxon>Embryophyta</taxon>
        <taxon>Tracheophyta</taxon>
        <taxon>Spermatophyta</taxon>
        <taxon>Magnoliopsida</taxon>
        <taxon>eudicotyledons</taxon>
        <taxon>Gunneridae</taxon>
        <taxon>Pentapetalae</taxon>
        <taxon>rosids</taxon>
        <taxon>malvids</taxon>
        <taxon>Brassicales</taxon>
        <taxon>Brassicaceae</taxon>
        <taxon>Camelineae</taxon>
        <taxon>Arabidopsis</taxon>
    </lineage>
</organism>
<reference key="1">
    <citation type="journal article" date="1991" name="Plant Cell">
        <title>Tryptophan mutants in Arabidopsis: the consequences of duplicated tryptophan synthase beta genes.</title>
        <authorList>
            <person name="Last R.L."/>
            <person name="Bissinger P.H."/>
            <person name="Mahoney D.J."/>
            <person name="Radwanski E.R."/>
            <person name="Fink G.R."/>
        </authorList>
    </citation>
    <scope>NUCLEOTIDE SEQUENCE [GENOMIC DNA]</scope>
    <source>
        <strain>cv. Columbia</strain>
    </source>
</reference>
<reference key="2">
    <citation type="journal article" date="1999" name="Nature">
        <title>Sequence and analysis of chromosome 4 of the plant Arabidopsis thaliana.</title>
        <authorList>
            <person name="Mayer K.F.X."/>
            <person name="Schueller C."/>
            <person name="Wambutt R."/>
            <person name="Murphy G."/>
            <person name="Volckaert G."/>
            <person name="Pohl T."/>
            <person name="Duesterhoeft A."/>
            <person name="Stiekema W."/>
            <person name="Entian K.-D."/>
            <person name="Terryn N."/>
            <person name="Harris B."/>
            <person name="Ansorge W."/>
            <person name="Brandt P."/>
            <person name="Grivell L.A."/>
            <person name="Rieger M."/>
            <person name="Weichselgartner M."/>
            <person name="de Simone V."/>
            <person name="Obermaier B."/>
            <person name="Mache R."/>
            <person name="Mueller M."/>
            <person name="Kreis M."/>
            <person name="Delseny M."/>
            <person name="Puigdomenech P."/>
            <person name="Watson M."/>
            <person name="Schmidtheini T."/>
            <person name="Reichert B."/>
            <person name="Portetelle D."/>
            <person name="Perez-Alonso M."/>
            <person name="Boutry M."/>
            <person name="Bancroft I."/>
            <person name="Vos P."/>
            <person name="Hoheisel J."/>
            <person name="Zimmermann W."/>
            <person name="Wedler H."/>
            <person name="Ridley P."/>
            <person name="Langham S.-A."/>
            <person name="McCullagh B."/>
            <person name="Bilham L."/>
            <person name="Robben J."/>
            <person name="van der Schueren J."/>
            <person name="Grymonprez B."/>
            <person name="Chuang Y.-J."/>
            <person name="Vandenbussche F."/>
            <person name="Braeken M."/>
            <person name="Weltjens I."/>
            <person name="Voet M."/>
            <person name="Bastiaens I."/>
            <person name="Aert R."/>
            <person name="Defoor E."/>
            <person name="Weitzenegger T."/>
            <person name="Bothe G."/>
            <person name="Ramsperger U."/>
            <person name="Hilbert H."/>
            <person name="Braun M."/>
            <person name="Holzer E."/>
            <person name="Brandt A."/>
            <person name="Peters S."/>
            <person name="van Staveren M."/>
            <person name="Dirkse W."/>
            <person name="Mooijman P."/>
            <person name="Klein Lankhorst R."/>
            <person name="Rose M."/>
            <person name="Hauf J."/>
            <person name="Koetter P."/>
            <person name="Berneiser S."/>
            <person name="Hempel S."/>
            <person name="Feldpausch M."/>
            <person name="Lamberth S."/>
            <person name="Van den Daele H."/>
            <person name="De Keyser A."/>
            <person name="Buysshaert C."/>
            <person name="Gielen J."/>
            <person name="Villarroel R."/>
            <person name="De Clercq R."/>
            <person name="van Montagu M."/>
            <person name="Rogers J."/>
            <person name="Cronin A."/>
            <person name="Quail M.A."/>
            <person name="Bray-Allen S."/>
            <person name="Clark L."/>
            <person name="Doggett J."/>
            <person name="Hall S."/>
            <person name="Kay M."/>
            <person name="Lennard N."/>
            <person name="McLay K."/>
            <person name="Mayes R."/>
            <person name="Pettett A."/>
            <person name="Rajandream M.A."/>
            <person name="Lyne M."/>
            <person name="Benes V."/>
            <person name="Rechmann S."/>
            <person name="Borkova D."/>
            <person name="Bloecker H."/>
            <person name="Scharfe M."/>
            <person name="Grimm M."/>
            <person name="Loehnert T.-H."/>
            <person name="Dose S."/>
            <person name="de Haan M."/>
            <person name="Maarse A.C."/>
            <person name="Schaefer M."/>
            <person name="Mueller-Auer S."/>
            <person name="Gabel C."/>
            <person name="Fuchs M."/>
            <person name="Fartmann B."/>
            <person name="Granderath K."/>
            <person name="Dauner D."/>
            <person name="Herzl A."/>
            <person name="Neumann S."/>
            <person name="Argiriou A."/>
            <person name="Vitale D."/>
            <person name="Liguori R."/>
            <person name="Piravandi E."/>
            <person name="Massenet O."/>
            <person name="Quigley F."/>
            <person name="Clabauld G."/>
            <person name="Muendlein A."/>
            <person name="Felber R."/>
            <person name="Schnabl S."/>
            <person name="Hiller R."/>
            <person name="Schmidt W."/>
            <person name="Lecharny A."/>
            <person name="Aubourg S."/>
            <person name="Chefdor F."/>
            <person name="Cooke R."/>
            <person name="Berger C."/>
            <person name="Monfort A."/>
            <person name="Casacuberta E."/>
            <person name="Gibbons T."/>
            <person name="Weber N."/>
            <person name="Vandenbol M."/>
            <person name="Bargues M."/>
            <person name="Terol J."/>
            <person name="Torres A."/>
            <person name="Perez-Perez A."/>
            <person name="Purnelle B."/>
            <person name="Bent E."/>
            <person name="Johnson S."/>
            <person name="Tacon D."/>
            <person name="Jesse T."/>
            <person name="Heijnen L."/>
            <person name="Schwarz S."/>
            <person name="Scholler P."/>
            <person name="Heber S."/>
            <person name="Francs P."/>
            <person name="Bielke C."/>
            <person name="Frishman D."/>
            <person name="Haase D."/>
            <person name="Lemcke K."/>
            <person name="Mewes H.-W."/>
            <person name="Stocker S."/>
            <person name="Zaccaria P."/>
            <person name="Bevan M."/>
            <person name="Wilson R.K."/>
            <person name="de la Bastide M."/>
            <person name="Habermann K."/>
            <person name="Parnell L."/>
            <person name="Dedhia N."/>
            <person name="Gnoj L."/>
            <person name="Schutz K."/>
            <person name="Huang E."/>
            <person name="Spiegel L."/>
            <person name="Sekhon M."/>
            <person name="Murray J."/>
            <person name="Sheet P."/>
            <person name="Cordes M."/>
            <person name="Abu-Threideh J."/>
            <person name="Stoneking T."/>
            <person name="Kalicki J."/>
            <person name="Graves T."/>
            <person name="Harmon G."/>
            <person name="Edwards J."/>
            <person name="Latreille P."/>
            <person name="Courtney L."/>
            <person name="Cloud J."/>
            <person name="Abbott A."/>
            <person name="Scott K."/>
            <person name="Johnson D."/>
            <person name="Minx P."/>
            <person name="Bentley D."/>
            <person name="Fulton B."/>
            <person name="Miller N."/>
            <person name="Greco T."/>
            <person name="Kemp K."/>
            <person name="Kramer J."/>
            <person name="Fulton L."/>
            <person name="Mardis E."/>
            <person name="Dante M."/>
            <person name="Pepin K."/>
            <person name="Hillier L.W."/>
            <person name="Nelson J."/>
            <person name="Spieth J."/>
            <person name="Ryan E."/>
            <person name="Andrews S."/>
            <person name="Geisel C."/>
            <person name="Layman D."/>
            <person name="Du H."/>
            <person name="Ali J."/>
            <person name="Berghoff A."/>
            <person name="Jones K."/>
            <person name="Drone K."/>
            <person name="Cotton M."/>
            <person name="Joshu C."/>
            <person name="Antonoiu B."/>
            <person name="Zidanic M."/>
            <person name="Strong C."/>
            <person name="Sun H."/>
            <person name="Lamar B."/>
            <person name="Yordan C."/>
            <person name="Ma P."/>
            <person name="Zhong J."/>
            <person name="Preston R."/>
            <person name="Vil D."/>
            <person name="Shekher M."/>
            <person name="Matero A."/>
            <person name="Shah R."/>
            <person name="Swaby I.K."/>
            <person name="O'Shaughnessy A."/>
            <person name="Rodriguez M."/>
            <person name="Hoffman J."/>
            <person name="Till S."/>
            <person name="Granat S."/>
            <person name="Shohdy N."/>
            <person name="Hasegawa A."/>
            <person name="Hameed A."/>
            <person name="Lodhi M."/>
            <person name="Johnson A."/>
            <person name="Chen E."/>
            <person name="Marra M.A."/>
            <person name="Martienssen R."/>
            <person name="McCombie W.R."/>
        </authorList>
    </citation>
    <scope>NUCLEOTIDE SEQUENCE [LARGE SCALE GENOMIC DNA]</scope>
    <source>
        <strain>cv. Columbia</strain>
    </source>
</reference>
<reference key="3">
    <citation type="journal article" date="2017" name="Plant J.">
        <title>Araport11: a complete reannotation of the Arabidopsis thaliana reference genome.</title>
        <authorList>
            <person name="Cheng C.Y."/>
            <person name="Krishnakumar V."/>
            <person name="Chan A.P."/>
            <person name="Thibaud-Nissen F."/>
            <person name="Schobel S."/>
            <person name="Town C.D."/>
        </authorList>
    </citation>
    <scope>GENOME REANNOTATION</scope>
    <source>
        <strain>cv. Columbia</strain>
    </source>
</reference>
<reference key="4">
    <citation type="journal article" date="2003" name="Science">
        <title>Empirical analysis of transcriptional activity in the Arabidopsis genome.</title>
        <authorList>
            <person name="Yamada K."/>
            <person name="Lim J."/>
            <person name="Dale J.M."/>
            <person name="Chen H."/>
            <person name="Shinn P."/>
            <person name="Palm C.J."/>
            <person name="Southwick A.M."/>
            <person name="Wu H.C."/>
            <person name="Kim C.J."/>
            <person name="Nguyen M."/>
            <person name="Pham P.K."/>
            <person name="Cheuk R.F."/>
            <person name="Karlin-Newmann G."/>
            <person name="Liu S.X."/>
            <person name="Lam B."/>
            <person name="Sakano H."/>
            <person name="Wu T."/>
            <person name="Yu G."/>
            <person name="Miranda M."/>
            <person name="Quach H.L."/>
            <person name="Tripp M."/>
            <person name="Chang C.H."/>
            <person name="Lee J.M."/>
            <person name="Toriumi M.J."/>
            <person name="Chan M.M."/>
            <person name="Tang C.C."/>
            <person name="Onodera C.S."/>
            <person name="Deng J.M."/>
            <person name="Akiyama K."/>
            <person name="Ansari Y."/>
            <person name="Arakawa T."/>
            <person name="Banh J."/>
            <person name="Banno F."/>
            <person name="Bowser L."/>
            <person name="Brooks S.Y."/>
            <person name="Carninci P."/>
            <person name="Chao Q."/>
            <person name="Choy N."/>
            <person name="Enju A."/>
            <person name="Goldsmith A.D."/>
            <person name="Gurjal M."/>
            <person name="Hansen N.F."/>
            <person name="Hayashizaki Y."/>
            <person name="Johnson-Hopson C."/>
            <person name="Hsuan V.W."/>
            <person name="Iida K."/>
            <person name="Karnes M."/>
            <person name="Khan S."/>
            <person name="Koesema E."/>
            <person name="Ishida J."/>
            <person name="Jiang P.X."/>
            <person name="Jones T."/>
            <person name="Kawai J."/>
            <person name="Kamiya A."/>
            <person name="Meyers C."/>
            <person name="Nakajima M."/>
            <person name="Narusaka M."/>
            <person name="Seki M."/>
            <person name="Sakurai T."/>
            <person name="Satou M."/>
            <person name="Tamse R."/>
            <person name="Vaysberg M."/>
            <person name="Wallender E.K."/>
            <person name="Wong C."/>
            <person name="Yamamura Y."/>
            <person name="Yuan S."/>
            <person name="Shinozaki K."/>
            <person name="Davis R.W."/>
            <person name="Theologis A."/>
            <person name="Ecker J.R."/>
        </authorList>
    </citation>
    <scope>NUCLEOTIDE SEQUENCE [LARGE SCALE MRNA]</scope>
    <source>
        <strain>cv. Columbia</strain>
    </source>
</reference>
<reference key="5">
    <citation type="submission" date="2002-03" db="EMBL/GenBank/DDBJ databases">
        <title>Full-length cDNA from Arabidopsis thaliana.</title>
        <authorList>
            <person name="Brover V.V."/>
            <person name="Troukhan M.E."/>
            <person name="Alexandrov N.A."/>
            <person name="Lu Y.-P."/>
            <person name="Flavell R.B."/>
            <person name="Feldmann K.A."/>
        </authorList>
    </citation>
    <scope>NUCLEOTIDE SEQUENCE [LARGE SCALE MRNA]</scope>
</reference>
<reference key="6">
    <citation type="journal article" date="2012" name="Mol. Cell. Proteomics">
        <title>Comparative large-scale characterisation of plant vs. mammal proteins reveals similar and idiosyncratic N-alpha acetylation features.</title>
        <authorList>
            <person name="Bienvenut W.V."/>
            <person name="Sumpton D."/>
            <person name="Martinez A."/>
            <person name="Lilla S."/>
            <person name="Espagne C."/>
            <person name="Meinnel T."/>
            <person name="Giglione C."/>
        </authorList>
    </citation>
    <scope>ACETYLATION [LARGE SCALE ANALYSIS] AT THR-52</scope>
    <scope>CLEAVAGE OF TRANSIT PEPTIDE [LARGE SCALE ANALYSIS] AFTER CYS-51</scope>
    <scope>IDENTIFICATION BY MASS SPECTROMETRY [LARGE SCALE ANALYSIS]</scope>
</reference>
<proteinExistence type="evidence at protein level"/>
<protein>
    <recommendedName>
        <fullName>Tryptophan synthase beta chain 2, chloroplastic</fullName>
        <ecNumber>4.2.1.20</ecNumber>
    </recommendedName>
</protein>
<name>TRBP2_ARATH</name>
<sequence length="475" mass="51601">MATASTAATFRPSSVSASSELTHLRSPSKLPKFTPLPSARSRSSSSFSVSCTIAKDPAVVMADSEKIKAAGSDPTMWQRPDSFGRFGKFGGKYVPETLMHALSELETAFYSLATDEDFQRELAEILKDYVGRESPLYFAERLTEHYRRENGEGPLIYLKREDLNHTGAHKINNAVAQALLAKRLGKKRIIAETGAGQHGVATATVCARFGLQCIIYMGAQDMERQALNVFRMRLLGAEVRGVHSGTATLKDATSEAIRDWVTNVETTHYILGSVAGPHPYPMMVRDFHAVIGKETRKQAMEKWGGKPDVLVACVGGGSNAMGLFHEFVDDTEVRMIGVEAAGFGLDSGKHAATLTKGDVGVLHGAMSYLLQDDDGQIIEPHSISAGLDYPGVGPEHSFLKDVGRAEYFSVTDEEALEAFKRVSRLEGIIPALETSHALAHLEKLCPTLPDGARVVLNFSGRGDKDVQTAIKYLEV</sequence>
<gene>
    <name type="primary">TSB2</name>
    <name type="ordered locus">At4g27070</name>
    <name type="ORF">T24A18.20</name>
</gene>
<feature type="transit peptide" description="Chloroplast" evidence="4">
    <location>
        <begin position="1"/>
        <end position="51"/>
    </location>
</feature>
<feature type="chain" id="PRO_0000035784" description="Tryptophan synthase beta chain 2, chloroplastic">
    <location>
        <begin position="52"/>
        <end position="475"/>
    </location>
</feature>
<feature type="region of interest" description="Disordered" evidence="2">
    <location>
        <begin position="1"/>
        <end position="44"/>
    </location>
</feature>
<feature type="compositionally biased region" description="Polar residues" evidence="2">
    <location>
        <begin position="1"/>
        <end position="21"/>
    </location>
</feature>
<feature type="modified residue" description="N-acetylthreonine" evidence="4">
    <location>
        <position position="52"/>
    </location>
</feature>
<feature type="modified residue" description="N6-(pyridoxal phosphate)lysine" evidence="1">
    <location>
        <position position="170"/>
    </location>
</feature>
<comment type="function">
    <text>The beta subunit is responsible for the synthesis of L-tryptophan from indole and L-serine.</text>
</comment>
<comment type="catalytic activity">
    <reaction>
        <text>(1S,2R)-1-C-(indol-3-yl)glycerol 3-phosphate + L-serine = D-glyceraldehyde 3-phosphate + L-tryptophan + H2O</text>
        <dbReference type="Rhea" id="RHEA:10532"/>
        <dbReference type="ChEBI" id="CHEBI:15377"/>
        <dbReference type="ChEBI" id="CHEBI:33384"/>
        <dbReference type="ChEBI" id="CHEBI:57912"/>
        <dbReference type="ChEBI" id="CHEBI:58866"/>
        <dbReference type="ChEBI" id="CHEBI:59776"/>
        <dbReference type="EC" id="4.2.1.20"/>
    </reaction>
</comment>
<comment type="cofactor">
    <cofactor>
        <name>pyridoxal 5'-phosphate</name>
        <dbReference type="ChEBI" id="CHEBI:597326"/>
    </cofactor>
</comment>
<comment type="pathway">
    <text>Amino-acid biosynthesis; L-tryptophan biosynthesis; L-tryptophan from chorismate: step 5/5.</text>
</comment>
<comment type="subunit">
    <text>Tetramer of two alpha and two beta chains.</text>
</comment>
<comment type="interaction">
    <interactant intactId="EBI-25529585">
        <id>P25269</id>
    </interactant>
    <interactant intactId="EBI-1392093">
        <id>Q5ICL9</id>
        <label>NPR4</label>
    </interactant>
    <organismsDiffer>false</organismsDiffer>
    <experiments>3</experiments>
</comment>
<comment type="subcellular location">
    <subcellularLocation>
        <location evidence="3">Plastid</location>
        <location evidence="3">Chloroplast</location>
    </subcellularLocation>
</comment>
<comment type="similarity">
    <text evidence="3">Belongs to the TrpB family.</text>
</comment>
<keyword id="KW-0007">Acetylation</keyword>
<keyword id="KW-0028">Amino-acid biosynthesis</keyword>
<keyword id="KW-0057">Aromatic amino acid biosynthesis</keyword>
<keyword id="KW-0150">Chloroplast</keyword>
<keyword id="KW-0456">Lyase</keyword>
<keyword id="KW-0934">Plastid</keyword>
<keyword id="KW-0663">Pyridoxal phosphate</keyword>
<keyword id="KW-1185">Reference proteome</keyword>
<keyword id="KW-0809">Transit peptide</keyword>
<keyword id="KW-0822">Tryptophan biosynthesis</keyword>
<accession>P25269</accession>
<dbReference type="EC" id="4.2.1.20"/>
<dbReference type="EMBL" id="M81620">
    <property type="protein sequence ID" value="AAA32879.1"/>
    <property type="molecule type" value="Genomic_DNA"/>
</dbReference>
<dbReference type="EMBL" id="AL035680">
    <property type="protein sequence ID" value="CAB38837.1"/>
    <property type="molecule type" value="Genomic_DNA"/>
</dbReference>
<dbReference type="EMBL" id="AL161566">
    <property type="protein sequence ID" value="CAB79562.1"/>
    <property type="molecule type" value="Genomic_DNA"/>
</dbReference>
<dbReference type="EMBL" id="CP002687">
    <property type="protein sequence ID" value="AEE85296.1"/>
    <property type="molecule type" value="Genomic_DNA"/>
</dbReference>
<dbReference type="EMBL" id="BT003144">
    <property type="protein sequence ID" value="AAO24576.1"/>
    <property type="molecule type" value="mRNA"/>
</dbReference>
<dbReference type="EMBL" id="AY084334">
    <property type="protein sequence ID" value="AAM60917.1"/>
    <property type="molecule type" value="mRNA"/>
</dbReference>
<dbReference type="PIR" id="JQ1073">
    <property type="entry name" value="JQ1073"/>
</dbReference>
<dbReference type="PIR" id="T06037">
    <property type="entry name" value="T06037"/>
</dbReference>
<dbReference type="RefSeq" id="NP_194437.1">
    <property type="nucleotide sequence ID" value="NM_118841.5"/>
</dbReference>
<dbReference type="SMR" id="P25269"/>
<dbReference type="BioGRID" id="14102">
    <property type="interactions" value="4"/>
</dbReference>
<dbReference type="FunCoup" id="P25269">
    <property type="interactions" value="761"/>
</dbReference>
<dbReference type="IntAct" id="P25269">
    <property type="interactions" value="1"/>
</dbReference>
<dbReference type="STRING" id="3702.P25269"/>
<dbReference type="iPTMnet" id="P25269"/>
<dbReference type="PaxDb" id="3702-AT4G27070.1"/>
<dbReference type="ProteomicsDB" id="228339"/>
<dbReference type="EnsemblPlants" id="AT4G27070.1">
    <property type="protein sequence ID" value="AT4G27070.1"/>
    <property type="gene ID" value="AT4G27070"/>
</dbReference>
<dbReference type="GeneID" id="828815"/>
<dbReference type="Gramene" id="AT4G27070.1">
    <property type="protein sequence ID" value="AT4G27070.1"/>
    <property type="gene ID" value="AT4G27070"/>
</dbReference>
<dbReference type="KEGG" id="ath:AT4G27070"/>
<dbReference type="Araport" id="AT4G27070"/>
<dbReference type="TAIR" id="AT4G27070">
    <property type="gene designation" value="TSB2"/>
</dbReference>
<dbReference type="eggNOG" id="KOG1395">
    <property type="taxonomic scope" value="Eukaryota"/>
</dbReference>
<dbReference type="HOGENOM" id="CLU_016734_3_1_1"/>
<dbReference type="InParanoid" id="P25269"/>
<dbReference type="OMA" id="PLTLCQN"/>
<dbReference type="PhylomeDB" id="P25269"/>
<dbReference type="BioCyc" id="ARA:AT4G27070-MONOMER"/>
<dbReference type="UniPathway" id="UPA00035">
    <property type="reaction ID" value="UER00044"/>
</dbReference>
<dbReference type="PRO" id="PR:P25269"/>
<dbReference type="Proteomes" id="UP000006548">
    <property type="component" value="Chromosome 4"/>
</dbReference>
<dbReference type="ExpressionAtlas" id="P25269">
    <property type="expression patterns" value="baseline and differential"/>
</dbReference>
<dbReference type="GO" id="GO:0009941">
    <property type="term" value="C:chloroplast envelope"/>
    <property type="evidence" value="ECO:0007005"/>
    <property type="project" value="TAIR"/>
</dbReference>
<dbReference type="GO" id="GO:0009570">
    <property type="term" value="C:chloroplast stroma"/>
    <property type="evidence" value="ECO:0007005"/>
    <property type="project" value="TAIR"/>
</dbReference>
<dbReference type="GO" id="GO:0004834">
    <property type="term" value="F:tryptophan synthase activity"/>
    <property type="evidence" value="ECO:0000250"/>
    <property type="project" value="TAIR"/>
</dbReference>
<dbReference type="GO" id="GO:0000162">
    <property type="term" value="P:L-tryptophan biosynthetic process"/>
    <property type="evidence" value="ECO:0000304"/>
    <property type="project" value="TAIR"/>
</dbReference>
<dbReference type="CDD" id="cd06446">
    <property type="entry name" value="Trp-synth_B"/>
    <property type="match status" value="1"/>
</dbReference>
<dbReference type="FunFam" id="3.40.50.1100:FF:000001">
    <property type="entry name" value="Tryptophan synthase beta chain"/>
    <property type="match status" value="1"/>
</dbReference>
<dbReference type="FunFam" id="3.40.50.1100:FF:000004">
    <property type="entry name" value="Tryptophan synthase beta chain"/>
    <property type="match status" value="1"/>
</dbReference>
<dbReference type="Gene3D" id="3.40.50.1100">
    <property type="match status" value="2"/>
</dbReference>
<dbReference type="HAMAP" id="MF_00133">
    <property type="entry name" value="Trp_synth_beta"/>
    <property type="match status" value="1"/>
</dbReference>
<dbReference type="InterPro" id="IPR006653">
    <property type="entry name" value="Trp_synth_b_CS"/>
</dbReference>
<dbReference type="InterPro" id="IPR006654">
    <property type="entry name" value="Trp_synth_beta"/>
</dbReference>
<dbReference type="InterPro" id="IPR023026">
    <property type="entry name" value="Trp_synth_beta/beta-like"/>
</dbReference>
<dbReference type="InterPro" id="IPR001926">
    <property type="entry name" value="TrpB-like_PALP"/>
</dbReference>
<dbReference type="InterPro" id="IPR036052">
    <property type="entry name" value="TrpB-like_PALP_sf"/>
</dbReference>
<dbReference type="NCBIfam" id="TIGR00263">
    <property type="entry name" value="trpB"/>
    <property type="match status" value="1"/>
</dbReference>
<dbReference type="PANTHER" id="PTHR48077:SF3">
    <property type="entry name" value="TRYPTOPHAN SYNTHASE"/>
    <property type="match status" value="1"/>
</dbReference>
<dbReference type="PANTHER" id="PTHR48077">
    <property type="entry name" value="TRYPTOPHAN SYNTHASE-RELATED"/>
    <property type="match status" value="1"/>
</dbReference>
<dbReference type="Pfam" id="PF00291">
    <property type="entry name" value="PALP"/>
    <property type="match status" value="1"/>
</dbReference>
<dbReference type="PIRSF" id="PIRSF001413">
    <property type="entry name" value="Trp_syn_beta"/>
    <property type="match status" value="1"/>
</dbReference>
<dbReference type="SUPFAM" id="SSF53686">
    <property type="entry name" value="Tryptophan synthase beta subunit-like PLP-dependent enzymes"/>
    <property type="match status" value="1"/>
</dbReference>
<dbReference type="PROSITE" id="PS00168">
    <property type="entry name" value="TRP_SYNTHASE_BETA"/>
    <property type="match status" value="1"/>
</dbReference>